<reference key="1">
    <citation type="journal article" date="2002" name="Lancet">
        <title>Genome and virulence determinants of high virulence community-acquired MRSA.</title>
        <authorList>
            <person name="Baba T."/>
            <person name="Takeuchi F."/>
            <person name="Kuroda M."/>
            <person name="Yuzawa H."/>
            <person name="Aoki K."/>
            <person name="Oguchi A."/>
            <person name="Nagai Y."/>
            <person name="Iwama N."/>
            <person name="Asano K."/>
            <person name="Naimi T."/>
            <person name="Kuroda H."/>
            <person name="Cui L."/>
            <person name="Yamamoto K."/>
            <person name="Hiramatsu K."/>
        </authorList>
    </citation>
    <scope>NUCLEOTIDE SEQUENCE [LARGE SCALE GENOMIC DNA]</scope>
    <source>
        <strain>MW2</strain>
    </source>
</reference>
<name>HSLV_STAAW</name>
<comment type="function">
    <text evidence="1">Protease subunit of a proteasome-like degradation complex believed to be a general protein degrading machinery.</text>
</comment>
<comment type="catalytic activity">
    <reaction evidence="1">
        <text>ATP-dependent cleavage of peptide bonds with broad specificity.</text>
        <dbReference type="EC" id="3.4.25.2"/>
    </reaction>
</comment>
<comment type="activity regulation">
    <text evidence="1">Allosterically activated by HslU binding.</text>
</comment>
<comment type="subunit">
    <text evidence="1">A double ring-shaped homohexamer of HslV is capped on each side by a ring-shaped HslU homohexamer. The assembly of the HslU/HslV complex is dependent on binding of ATP.</text>
</comment>
<comment type="subcellular location">
    <subcellularLocation>
        <location evidence="1">Cytoplasm</location>
    </subcellularLocation>
</comment>
<comment type="similarity">
    <text evidence="1">Belongs to the peptidase T1B family. HslV subfamily.</text>
</comment>
<evidence type="ECO:0000255" key="1">
    <source>
        <dbReference type="HAMAP-Rule" id="MF_00248"/>
    </source>
</evidence>
<accession>P65798</accession>
<accession>Q99UL8</accession>
<feature type="chain" id="PRO_0000148151" description="ATP-dependent protease subunit HslV">
    <location>
        <begin position="1"/>
        <end position="181"/>
    </location>
</feature>
<feature type="active site" evidence="1">
    <location>
        <position position="9"/>
    </location>
</feature>
<feature type="binding site" evidence="1">
    <location>
        <position position="166"/>
    </location>
    <ligand>
        <name>Na(+)</name>
        <dbReference type="ChEBI" id="CHEBI:29101"/>
    </ligand>
</feature>
<feature type="binding site" evidence="1">
    <location>
        <position position="169"/>
    </location>
    <ligand>
        <name>Na(+)</name>
        <dbReference type="ChEBI" id="CHEBI:29101"/>
    </ligand>
</feature>
<feature type="binding site" evidence="1">
    <location>
        <position position="172"/>
    </location>
    <ligand>
        <name>Na(+)</name>
        <dbReference type="ChEBI" id="CHEBI:29101"/>
    </ligand>
</feature>
<keyword id="KW-0021">Allosteric enzyme</keyword>
<keyword id="KW-0963">Cytoplasm</keyword>
<keyword id="KW-0378">Hydrolase</keyword>
<keyword id="KW-0479">Metal-binding</keyword>
<keyword id="KW-0645">Protease</keyword>
<keyword id="KW-0915">Sodium</keyword>
<keyword id="KW-0888">Threonine protease</keyword>
<protein>
    <recommendedName>
        <fullName evidence="1">ATP-dependent protease subunit HslV</fullName>
        <ecNumber evidence="1">3.4.25.2</ecNumber>
    </recommendedName>
</protein>
<sequence>MSNTTLHATTIYAVRHNGKAAMAGDGQVTLGQQVIMKQTARKVRRLYEGKVLAGFAGSVADAFTLFEKFETKLQQFSGNLERAAVELAQEWRGDKQLRQLEAMLIVMDKDAILVVSGTGEVIAPDDDLIAIGSGGNYALSAGRALKRHASHLSAEEMAYESLKVAADICVFTNDNIVVETL</sequence>
<dbReference type="EC" id="3.4.25.2" evidence="1"/>
<dbReference type="EMBL" id="BA000033">
    <property type="protein sequence ID" value="BAB95001.1"/>
    <property type="molecule type" value="Genomic_DNA"/>
</dbReference>
<dbReference type="RefSeq" id="WP_000072681.1">
    <property type="nucleotide sequence ID" value="NC_003923.1"/>
</dbReference>
<dbReference type="SMR" id="P65798"/>
<dbReference type="MEROPS" id="T01.007"/>
<dbReference type="KEGG" id="sam:MW1136"/>
<dbReference type="HOGENOM" id="CLU_093872_1_1_9"/>
<dbReference type="GO" id="GO:0009376">
    <property type="term" value="C:HslUV protease complex"/>
    <property type="evidence" value="ECO:0007669"/>
    <property type="project" value="UniProtKB-UniRule"/>
</dbReference>
<dbReference type="GO" id="GO:0005839">
    <property type="term" value="C:proteasome core complex"/>
    <property type="evidence" value="ECO:0007669"/>
    <property type="project" value="InterPro"/>
</dbReference>
<dbReference type="GO" id="GO:0046872">
    <property type="term" value="F:metal ion binding"/>
    <property type="evidence" value="ECO:0007669"/>
    <property type="project" value="UniProtKB-KW"/>
</dbReference>
<dbReference type="GO" id="GO:0004298">
    <property type="term" value="F:threonine-type endopeptidase activity"/>
    <property type="evidence" value="ECO:0007669"/>
    <property type="project" value="UniProtKB-KW"/>
</dbReference>
<dbReference type="GO" id="GO:0051603">
    <property type="term" value="P:proteolysis involved in protein catabolic process"/>
    <property type="evidence" value="ECO:0007669"/>
    <property type="project" value="InterPro"/>
</dbReference>
<dbReference type="CDD" id="cd01913">
    <property type="entry name" value="protease_HslV"/>
    <property type="match status" value="1"/>
</dbReference>
<dbReference type="Gene3D" id="3.60.20.10">
    <property type="entry name" value="Glutamine Phosphoribosylpyrophosphate, subunit 1, domain 1"/>
    <property type="match status" value="1"/>
</dbReference>
<dbReference type="HAMAP" id="MF_00248">
    <property type="entry name" value="HslV"/>
    <property type="match status" value="1"/>
</dbReference>
<dbReference type="InterPro" id="IPR022281">
    <property type="entry name" value="ATP-dep_Prtase_HsIV_su"/>
</dbReference>
<dbReference type="InterPro" id="IPR029055">
    <property type="entry name" value="Ntn_hydrolases_N"/>
</dbReference>
<dbReference type="InterPro" id="IPR001353">
    <property type="entry name" value="Proteasome_sua/b"/>
</dbReference>
<dbReference type="InterPro" id="IPR023333">
    <property type="entry name" value="Proteasome_suB-type"/>
</dbReference>
<dbReference type="NCBIfam" id="TIGR03692">
    <property type="entry name" value="ATP_dep_HslV"/>
    <property type="match status" value="1"/>
</dbReference>
<dbReference type="NCBIfam" id="NF003964">
    <property type="entry name" value="PRK05456.1"/>
    <property type="match status" value="1"/>
</dbReference>
<dbReference type="PANTHER" id="PTHR32194:SF0">
    <property type="entry name" value="ATP-DEPENDENT PROTEASE SUBUNIT HSLV"/>
    <property type="match status" value="1"/>
</dbReference>
<dbReference type="PANTHER" id="PTHR32194">
    <property type="entry name" value="METALLOPROTEASE TLDD"/>
    <property type="match status" value="1"/>
</dbReference>
<dbReference type="Pfam" id="PF00227">
    <property type="entry name" value="Proteasome"/>
    <property type="match status" value="1"/>
</dbReference>
<dbReference type="PIRSF" id="PIRSF039093">
    <property type="entry name" value="HslV"/>
    <property type="match status" value="1"/>
</dbReference>
<dbReference type="SUPFAM" id="SSF56235">
    <property type="entry name" value="N-terminal nucleophile aminohydrolases (Ntn hydrolases)"/>
    <property type="match status" value="1"/>
</dbReference>
<dbReference type="PROSITE" id="PS51476">
    <property type="entry name" value="PROTEASOME_BETA_2"/>
    <property type="match status" value="1"/>
</dbReference>
<gene>
    <name evidence="1" type="primary">hslV</name>
    <name type="synonym">clpQ</name>
    <name type="ordered locus">MW1136</name>
</gene>
<organism>
    <name type="scientific">Staphylococcus aureus (strain MW2)</name>
    <dbReference type="NCBI Taxonomy" id="196620"/>
    <lineage>
        <taxon>Bacteria</taxon>
        <taxon>Bacillati</taxon>
        <taxon>Bacillota</taxon>
        <taxon>Bacilli</taxon>
        <taxon>Bacillales</taxon>
        <taxon>Staphylococcaceae</taxon>
        <taxon>Staphylococcus</taxon>
    </lineage>
</organism>
<proteinExistence type="inferred from homology"/>